<accession>A7ZJ12</accession>
<keyword id="KW-0997">Cell inner membrane</keyword>
<keyword id="KW-1003">Cell membrane</keyword>
<keyword id="KW-0407">Ion channel</keyword>
<keyword id="KW-0406">Ion transport</keyword>
<keyword id="KW-0472">Membrane</keyword>
<keyword id="KW-0479">Metal-binding</keyword>
<keyword id="KW-1185">Reference proteome</keyword>
<keyword id="KW-0915">Sodium</keyword>
<keyword id="KW-0812">Transmembrane</keyword>
<keyword id="KW-1133">Transmembrane helix</keyword>
<keyword id="KW-0813">Transport</keyword>
<evidence type="ECO:0000255" key="1">
    <source>
        <dbReference type="HAMAP-Rule" id="MF_00454"/>
    </source>
</evidence>
<gene>
    <name evidence="1" type="primary">fluC</name>
    <name evidence="1" type="synonym">crcB</name>
    <name type="ordered locus">EcE24377A_0649</name>
</gene>
<sequence length="127" mass="13765">MLQLLLAVFIGGGTGSVARWLLSMRFNPLHQAIPLGTLAANLIGAFIIGMGFAWFSRMTNIDPVWKVLITTGFCGGLTTFSTFSAEVVFLLQEGRFGWALLNVFVNLLGSFAMTALAFWLFSASTAH</sequence>
<name>FLUC_ECO24</name>
<dbReference type="EMBL" id="CP000800">
    <property type="protein sequence ID" value="ABV17554.1"/>
    <property type="molecule type" value="Genomic_DNA"/>
</dbReference>
<dbReference type="RefSeq" id="WP_000939738.1">
    <property type="nucleotide sequence ID" value="NC_009801.1"/>
</dbReference>
<dbReference type="SMR" id="A7ZJ12"/>
<dbReference type="GeneID" id="93776858"/>
<dbReference type="KEGG" id="ecw:EcE24377A_0649"/>
<dbReference type="HOGENOM" id="CLU_114342_3_3_6"/>
<dbReference type="Proteomes" id="UP000001122">
    <property type="component" value="Chromosome"/>
</dbReference>
<dbReference type="GO" id="GO:0005886">
    <property type="term" value="C:plasma membrane"/>
    <property type="evidence" value="ECO:0007669"/>
    <property type="project" value="UniProtKB-SubCell"/>
</dbReference>
<dbReference type="GO" id="GO:0062054">
    <property type="term" value="F:fluoride channel activity"/>
    <property type="evidence" value="ECO:0007669"/>
    <property type="project" value="UniProtKB-UniRule"/>
</dbReference>
<dbReference type="GO" id="GO:0046872">
    <property type="term" value="F:metal ion binding"/>
    <property type="evidence" value="ECO:0007669"/>
    <property type="project" value="UniProtKB-KW"/>
</dbReference>
<dbReference type="GO" id="GO:0140114">
    <property type="term" value="P:cellular detoxification of fluoride"/>
    <property type="evidence" value="ECO:0007669"/>
    <property type="project" value="UniProtKB-UniRule"/>
</dbReference>
<dbReference type="HAMAP" id="MF_00454">
    <property type="entry name" value="FluC"/>
    <property type="match status" value="1"/>
</dbReference>
<dbReference type="InterPro" id="IPR003691">
    <property type="entry name" value="FluC"/>
</dbReference>
<dbReference type="NCBIfam" id="TIGR00494">
    <property type="entry name" value="crcB"/>
    <property type="match status" value="1"/>
</dbReference>
<dbReference type="NCBIfam" id="NF010792">
    <property type="entry name" value="PRK14196.1"/>
    <property type="match status" value="1"/>
</dbReference>
<dbReference type="PANTHER" id="PTHR28259">
    <property type="entry name" value="FLUORIDE EXPORT PROTEIN 1-RELATED"/>
    <property type="match status" value="1"/>
</dbReference>
<dbReference type="PANTHER" id="PTHR28259:SF1">
    <property type="entry name" value="FLUORIDE EXPORT PROTEIN 1-RELATED"/>
    <property type="match status" value="1"/>
</dbReference>
<dbReference type="Pfam" id="PF02537">
    <property type="entry name" value="CRCB"/>
    <property type="match status" value="1"/>
</dbReference>
<protein>
    <recommendedName>
        <fullName evidence="1">Fluoride-specific ion channel FluC</fullName>
    </recommendedName>
</protein>
<reference key="1">
    <citation type="journal article" date="2008" name="J. Bacteriol.">
        <title>The pangenome structure of Escherichia coli: comparative genomic analysis of E. coli commensal and pathogenic isolates.</title>
        <authorList>
            <person name="Rasko D.A."/>
            <person name="Rosovitz M.J."/>
            <person name="Myers G.S.A."/>
            <person name="Mongodin E.F."/>
            <person name="Fricke W.F."/>
            <person name="Gajer P."/>
            <person name="Crabtree J."/>
            <person name="Sebaihia M."/>
            <person name="Thomson N.R."/>
            <person name="Chaudhuri R."/>
            <person name="Henderson I.R."/>
            <person name="Sperandio V."/>
            <person name="Ravel J."/>
        </authorList>
    </citation>
    <scope>NUCLEOTIDE SEQUENCE [LARGE SCALE GENOMIC DNA]</scope>
    <source>
        <strain>E24377A / ETEC</strain>
    </source>
</reference>
<feature type="chain" id="PRO_1000060312" description="Fluoride-specific ion channel FluC">
    <location>
        <begin position="1"/>
        <end position="127"/>
    </location>
</feature>
<feature type="transmembrane region" description="Helical" evidence="1">
    <location>
        <begin position="4"/>
        <end position="24"/>
    </location>
</feature>
<feature type="transmembrane region" description="Helical" evidence="1">
    <location>
        <begin position="35"/>
        <end position="55"/>
    </location>
</feature>
<feature type="transmembrane region" description="Helical" evidence="1">
    <location>
        <begin position="71"/>
        <end position="91"/>
    </location>
</feature>
<feature type="transmembrane region" description="Helical" evidence="1">
    <location>
        <begin position="103"/>
        <end position="123"/>
    </location>
</feature>
<feature type="binding site" evidence="1">
    <location>
        <position position="75"/>
    </location>
    <ligand>
        <name>Na(+)</name>
        <dbReference type="ChEBI" id="CHEBI:29101"/>
        <note>structural</note>
    </ligand>
</feature>
<feature type="binding site" evidence="1">
    <location>
        <position position="78"/>
    </location>
    <ligand>
        <name>Na(+)</name>
        <dbReference type="ChEBI" id="CHEBI:29101"/>
        <note>structural</note>
    </ligand>
</feature>
<comment type="function">
    <text evidence="1">Fluoride-specific ion channel. Important for reducing fluoride concentration in the cell, thus reducing its toxicity.</text>
</comment>
<comment type="catalytic activity">
    <reaction evidence="1">
        <text>fluoride(in) = fluoride(out)</text>
        <dbReference type="Rhea" id="RHEA:76159"/>
        <dbReference type="ChEBI" id="CHEBI:17051"/>
    </reaction>
    <physiologicalReaction direction="left-to-right" evidence="1">
        <dbReference type="Rhea" id="RHEA:76160"/>
    </physiologicalReaction>
</comment>
<comment type="activity regulation">
    <text evidence="1">Na(+) is not transported, but it plays an essential structural role and its presence is essential for fluoride channel function.</text>
</comment>
<comment type="subcellular location">
    <subcellularLocation>
        <location evidence="1">Cell inner membrane</location>
        <topology evidence="1">Multi-pass membrane protein</topology>
    </subcellularLocation>
</comment>
<comment type="similarity">
    <text evidence="1">Belongs to the fluoride channel Fluc/FEX (TC 1.A.43) family.</text>
</comment>
<proteinExistence type="inferred from homology"/>
<organism>
    <name type="scientific">Escherichia coli O139:H28 (strain E24377A / ETEC)</name>
    <dbReference type="NCBI Taxonomy" id="331111"/>
    <lineage>
        <taxon>Bacteria</taxon>
        <taxon>Pseudomonadati</taxon>
        <taxon>Pseudomonadota</taxon>
        <taxon>Gammaproteobacteria</taxon>
        <taxon>Enterobacterales</taxon>
        <taxon>Enterobacteriaceae</taxon>
        <taxon>Escherichia</taxon>
    </lineage>
</organism>